<feature type="chain" id="PRO_1000098389" description="Methionyl-tRNA formyltransferase">
    <location>
        <begin position="1"/>
        <end position="318"/>
    </location>
</feature>
<feature type="binding site" evidence="1">
    <location>
        <begin position="111"/>
        <end position="114"/>
    </location>
    <ligand>
        <name>(6S)-5,6,7,8-tetrahydrofolate</name>
        <dbReference type="ChEBI" id="CHEBI:57453"/>
    </ligand>
</feature>
<gene>
    <name evidence="1" type="primary">fmt</name>
    <name type="ordered locus">Clim_1678</name>
</gene>
<reference key="1">
    <citation type="submission" date="2008-05" db="EMBL/GenBank/DDBJ databases">
        <title>Complete sequence of Chlorobium limicola DSM 245.</title>
        <authorList>
            <consortium name="US DOE Joint Genome Institute"/>
            <person name="Lucas S."/>
            <person name="Copeland A."/>
            <person name="Lapidus A."/>
            <person name="Glavina del Rio T."/>
            <person name="Dalin E."/>
            <person name="Tice H."/>
            <person name="Bruce D."/>
            <person name="Goodwin L."/>
            <person name="Pitluck S."/>
            <person name="Schmutz J."/>
            <person name="Larimer F."/>
            <person name="Land M."/>
            <person name="Hauser L."/>
            <person name="Kyrpides N."/>
            <person name="Ovchinnikova G."/>
            <person name="Zhao F."/>
            <person name="Li T."/>
            <person name="Liu Z."/>
            <person name="Overmann J."/>
            <person name="Bryant D.A."/>
            <person name="Richardson P."/>
        </authorList>
    </citation>
    <scope>NUCLEOTIDE SEQUENCE [LARGE SCALE GENOMIC DNA]</scope>
    <source>
        <strain>DSM 245 / NBRC 103803 / 6330</strain>
    </source>
</reference>
<dbReference type="EC" id="2.1.2.9" evidence="1"/>
<dbReference type="EMBL" id="CP001097">
    <property type="protein sequence ID" value="ACD90720.1"/>
    <property type="molecule type" value="Genomic_DNA"/>
</dbReference>
<dbReference type="RefSeq" id="WP_012466593.1">
    <property type="nucleotide sequence ID" value="NC_010803.1"/>
</dbReference>
<dbReference type="SMR" id="B3EE18"/>
<dbReference type="STRING" id="290315.Clim_1678"/>
<dbReference type="KEGG" id="cli:Clim_1678"/>
<dbReference type="eggNOG" id="COG0223">
    <property type="taxonomic scope" value="Bacteria"/>
</dbReference>
<dbReference type="HOGENOM" id="CLU_033347_1_1_10"/>
<dbReference type="OrthoDB" id="9802815at2"/>
<dbReference type="Proteomes" id="UP000008841">
    <property type="component" value="Chromosome"/>
</dbReference>
<dbReference type="GO" id="GO:0005829">
    <property type="term" value="C:cytosol"/>
    <property type="evidence" value="ECO:0007669"/>
    <property type="project" value="TreeGrafter"/>
</dbReference>
<dbReference type="GO" id="GO:0004479">
    <property type="term" value="F:methionyl-tRNA formyltransferase activity"/>
    <property type="evidence" value="ECO:0007669"/>
    <property type="project" value="UniProtKB-UniRule"/>
</dbReference>
<dbReference type="CDD" id="cd08646">
    <property type="entry name" value="FMT_core_Met-tRNA-FMT_N"/>
    <property type="match status" value="1"/>
</dbReference>
<dbReference type="CDD" id="cd08704">
    <property type="entry name" value="Met_tRNA_FMT_C"/>
    <property type="match status" value="1"/>
</dbReference>
<dbReference type="Gene3D" id="3.40.50.12230">
    <property type="match status" value="1"/>
</dbReference>
<dbReference type="HAMAP" id="MF_00182">
    <property type="entry name" value="Formyl_trans"/>
    <property type="match status" value="1"/>
</dbReference>
<dbReference type="InterPro" id="IPR005794">
    <property type="entry name" value="Fmt"/>
</dbReference>
<dbReference type="InterPro" id="IPR005793">
    <property type="entry name" value="Formyl_trans_C"/>
</dbReference>
<dbReference type="InterPro" id="IPR002376">
    <property type="entry name" value="Formyl_transf_N"/>
</dbReference>
<dbReference type="InterPro" id="IPR036477">
    <property type="entry name" value="Formyl_transf_N_sf"/>
</dbReference>
<dbReference type="InterPro" id="IPR011034">
    <property type="entry name" value="Formyl_transferase-like_C_sf"/>
</dbReference>
<dbReference type="InterPro" id="IPR044135">
    <property type="entry name" value="Met-tRNA-FMT_C"/>
</dbReference>
<dbReference type="InterPro" id="IPR041711">
    <property type="entry name" value="Met-tRNA-FMT_N"/>
</dbReference>
<dbReference type="NCBIfam" id="TIGR00460">
    <property type="entry name" value="fmt"/>
    <property type="match status" value="1"/>
</dbReference>
<dbReference type="PANTHER" id="PTHR11138">
    <property type="entry name" value="METHIONYL-TRNA FORMYLTRANSFERASE"/>
    <property type="match status" value="1"/>
</dbReference>
<dbReference type="PANTHER" id="PTHR11138:SF5">
    <property type="entry name" value="METHIONYL-TRNA FORMYLTRANSFERASE, MITOCHONDRIAL"/>
    <property type="match status" value="1"/>
</dbReference>
<dbReference type="Pfam" id="PF02911">
    <property type="entry name" value="Formyl_trans_C"/>
    <property type="match status" value="1"/>
</dbReference>
<dbReference type="Pfam" id="PF00551">
    <property type="entry name" value="Formyl_trans_N"/>
    <property type="match status" value="1"/>
</dbReference>
<dbReference type="SUPFAM" id="SSF50486">
    <property type="entry name" value="FMT C-terminal domain-like"/>
    <property type="match status" value="1"/>
</dbReference>
<dbReference type="SUPFAM" id="SSF53328">
    <property type="entry name" value="Formyltransferase"/>
    <property type="match status" value="1"/>
</dbReference>
<keyword id="KW-0648">Protein biosynthesis</keyword>
<keyword id="KW-0808">Transferase</keyword>
<proteinExistence type="inferred from homology"/>
<organism>
    <name type="scientific">Chlorobium limicola (strain DSM 245 / NBRC 103803 / 6330)</name>
    <dbReference type="NCBI Taxonomy" id="290315"/>
    <lineage>
        <taxon>Bacteria</taxon>
        <taxon>Pseudomonadati</taxon>
        <taxon>Chlorobiota</taxon>
        <taxon>Chlorobiia</taxon>
        <taxon>Chlorobiales</taxon>
        <taxon>Chlorobiaceae</taxon>
        <taxon>Chlorobium/Pelodictyon group</taxon>
        <taxon>Chlorobium</taxon>
    </lineage>
</organism>
<sequence>MRIVFMGTPDFAVPSLQRIASENHDFEIVLVVTGRDKPRRKKNALPEPTPVKQSALELGLPVYETDDPSSAEFASVVLASRPDVIVVAAFRILPPAVFSIARLGAFNLHASLLPAYRGAAPINWAIIRGEKVTGVTTFFLQEKVDTGSMILTENVTIAEDDNATRLAEKLSVKGAALVVETLHLINAGNVSVKKQDDSLASKAPKLTKENTRIRWNSRSAELCDFIRGLAMKPAAWTTMDGKTLKVYKAVPLESPISLPERGREPGLVYIDDSRLLVGTVDGWISLQQLQLEGKKIMEAQEFLRGFRYENREQPLLLL</sequence>
<evidence type="ECO:0000255" key="1">
    <source>
        <dbReference type="HAMAP-Rule" id="MF_00182"/>
    </source>
</evidence>
<name>FMT_CHLL2</name>
<protein>
    <recommendedName>
        <fullName evidence="1">Methionyl-tRNA formyltransferase</fullName>
        <ecNumber evidence="1">2.1.2.9</ecNumber>
    </recommendedName>
</protein>
<accession>B3EE18</accession>
<comment type="function">
    <text evidence="1">Attaches a formyl group to the free amino group of methionyl-tRNA(fMet). The formyl group appears to play a dual role in the initiator identity of N-formylmethionyl-tRNA by promoting its recognition by IF2 and preventing the misappropriation of this tRNA by the elongation apparatus.</text>
</comment>
<comment type="catalytic activity">
    <reaction evidence="1">
        <text>L-methionyl-tRNA(fMet) + (6R)-10-formyltetrahydrofolate = N-formyl-L-methionyl-tRNA(fMet) + (6S)-5,6,7,8-tetrahydrofolate + H(+)</text>
        <dbReference type="Rhea" id="RHEA:24380"/>
        <dbReference type="Rhea" id="RHEA-COMP:9952"/>
        <dbReference type="Rhea" id="RHEA-COMP:9953"/>
        <dbReference type="ChEBI" id="CHEBI:15378"/>
        <dbReference type="ChEBI" id="CHEBI:57453"/>
        <dbReference type="ChEBI" id="CHEBI:78530"/>
        <dbReference type="ChEBI" id="CHEBI:78844"/>
        <dbReference type="ChEBI" id="CHEBI:195366"/>
        <dbReference type="EC" id="2.1.2.9"/>
    </reaction>
</comment>
<comment type="similarity">
    <text evidence="1">Belongs to the Fmt family.</text>
</comment>